<keyword id="KW-0489">Methyltransferase</keyword>
<keyword id="KW-0949">S-adenosyl-L-methionine</keyword>
<keyword id="KW-0808">Transferase</keyword>
<keyword id="KW-0819">tRNA processing</keyword>
<organism>
    <name type="scientific">Buchnera aphidicola subsp. Schizaphis graminum (strain Sg)</name>
    <dbReference type="NCBI Taxonomy" id="198804"/>
    <lineage>
        <taxon>Bacteria</taxon>
        <taxon>Pseudomonadati</taxon>
        <taxon>Pseudomonadota</taxon>
        <taxon>Gammaproteobacteria</taxon>
        <taxon>Enterobacterales</taxon>
        <taxon>Erwiniaceae</taxon>
        <taxon>Buchnera</taxon>
    </lineage>
</organism>
<sequence length="239" mass="27959">MKNNIITPQYNCNGTFLRKNRSFVCRKGRITKSQLQAIEKYWLSIGIDFKLEPLDFTSVFKNSAPVILEIGFGSGESLVKTAANFPNKNFLGIEVYKSGIGSCLRLAHYSGINNLKIIYHDAIEVIDQMILDHTLSKVQIFFPDPWNKKRHHKRRMIQDFFLIKILKKLNNDGILHIVTDSKEYNFFILNLIQNIDNYINLSKKRMCFEHFKYRLVTNFEKKAKLSGNKIFDLIFKLKK</sequence>
<feature type="chain" id="PRO_0000171308" description="tRNA (guanine-N(7)-)-methyltransferase">
    <location>
        <begin position="1"/>
        <end position="239"/>
    </location>
</feature>
<feature type="active site" evidence="1">
    <location>
        <position position="144"/>
    </location>
</feature>
<feature type="binding site" evidence="2">
    <location>
        <position position="69"/>
    </location>
    <ligand>
        <name>S-adenosyl-L-methionine</name>
        <dbReference type="ChEBI" id="CHEBI:59789"/>
    </ligand>
</feature>
<feature type="binding site" evidence="2">
    <location>
        <position position="94"/>
    </location>
    <ligand>
        <name>S-adenosyl-L-methionine</name>
        <dbReference type="ChEBI" id="CHEBI:59789"/>
    </ligand>
</feature>
<feature type="binding site" evidence="2">
    <location>
        <position position="121"/>
    </location>
    <ligand>
        <name>S-adenosyl-L-methionine</name>
        <dbReference type="ChEBI" id="CHEBI:59789"/>
    </ligand>
</feature>
<feature type="binding site" evidence="2">
    <location>
        <position position="144"/>
    </location>
    <ligand>
        <name>S-adenosyl-L-methionine</name>
        <dbReference type="ChEBI" id="CHEBI:59789"/>
    </ligand>
</feature>
<feature type="binding site" evidence="2">
    <location>
        <position position="148"/>
    </location>
    <ligand>
        <name>substrate</name>
    </ligand>
</feature>
<feature type="binding site" evidence="2">
    <location>
        <position position="180"/>
    </location>
    <ligand>
        <name>substrate</name>
    </ligand>
</feature>
<feature type="binding site" evidence="2">
    <location>
        <begin position="217"/>
        <end position="220"/>
    </location>
    <ligand>
        <name>substrate</name>
    </ligand>
</feature>
<comment type="function">
    <text evidence="2">Catalyzes the formation of N(7)-methylguanine at position 46 (m7G46) in tRNA.</text>
</comment>
<comment type="catalytic activity">
    <reaction evidence="2">
        <text>guanosine(46) in tRNA + S-adenosyl-L-methionine = N(7)-methylguanosine(46) in tRNA + S-adenosyl-L-homocysteine</text>
        <dbReference type="Rhea" id="RHEA:42708"/>
        <dbReference type="Rhea" id="RHEA-COMP:10188"/>
        <dbReference type="Rhea" id="RHEA-COMP:10189"/>
        <dbReference type="ChEBI" id="CHEBI:57856"/>
        <dbReference type="ChEBI" id="CHEBI:59789"/>
        <dbReference type="ChEBI" id="CHEBI:74269"/>
        <dbReference type="ChEBI" id="CHEBI:74480"/>
        <dbReference type="EC" id="2.1.1.33"/>
    </reaction>
</comment>
<comment type="pathway">
    <text evidence="2">tRNA modification; N(7)-methylguanine-tRNA biosynthesis.</text>
</comment>
<comment type="subunit">
    <text evidence="2">Monomer.</text>
</comment>
<comment type="similarity">
    <text evidence="2">Belongs to the class I-like SAM-binding methyltransferase superfamily. TrmB family.</text>
</comment>
<evidence type="ECO:0000250" key="1"/>
<evidence type="ECO:0000255" key="2">
    <source>
        <dbReference type="HAMAP-Rule" id="MF_01057"/>
    </source>
</evidence>
<reference key="1">
    <citation type="journal article" date="2002" name="Science">
        <title>50 million years of genomic stasis in endosymbiotic bacteria.</title>
        <authorList>
            <person name="Tamas I."/>
            <person name="Klasson L."/>
            <person name="Canbaeck B."/>
            <person name="Naeslund A.K."/>
            <person name="Eriksson A.-S."/>
            <person name="Wernegreen J.J."/>
            <person name="Sandstroem J.P."/>
            <person name="Moran N.A."/>
            <person name="Andersson S.G.E."/>
        </authorList>
    </citation>
    <scope>NUCLEOTIDE SEQUENCE [LARGE SCALE GENOMIC DNA]</scope>
    <source>
        <strain>Sg</strain>
    </source>
</reference>
<dbReference type="EC" id="2.1.1.33" evidence="2"/>
<dbReference type="EMBL" id="AE013218">
    <property type="protein sequence ID" value="AAM68074.1"/>
    <property type="molecule type" value="Genomic_DNA"/>
</dbReference>
<dbReference type="RefSeq" id="WP_011054040.1">
    <property type="nucleotide sequence ID" value="NC_004061.1"/>
</dbReference>
<dbReference type="SMR" id="Q8K927"/>
<dbReference type="STRING" id="198804.BUsg_533"/>
<dbReference type="GeneID" id="93004008"/>
<dbReference type="KEGG" id="bas:BUsg_533"/>
<dbReference type="eggNOG" id="COG0220">
    <property type="taxonomic scope" value="Bacteria"/>
</dbReference>
<dbReference type="HOGENOM" id="CLU_050910_0_1_6"/>
<dbReference type="UniPathway" id="UPA00989"/>
<dbReference type="Proteomes" id="UP000000416">
    <property type="component" value="Chromosome"/>
</dbReference>
<dbReference type="GO" id="GO:0043527">
    <property type="term" value="C:tRNA methyltransferase complex"/>
    <property type="evidence" value="ECO:0007669"/>
    <property type="project" value="TreeGrafter"/>
</dbReference>
<dbReference type="GO" id="GO:0008176">
    <property type="term" value="F:tRNA (guanine(46)-N7)-methyltransferase activity"/>
    <property type="evidence" value="ECO:0007669"/>
    <property type="project" value="UniProtKB-UniRule"/>
</dbReference>
<dbReference type="Gene3D" id="3.40.50.150">
    <property type="entry name" value="Vaccinia Virus protein VP39"/>
    <property type="match status" value="1"/>
</dbReference>
<dbReference type="HAMAP" id="MF_01057">
    <property type="entry name" value="tRNA_methyltr_TrmB"/>
    <property type="match status" value="1"/>
</dbReference>
<dbReference type="InterPro" id="IPR029063">
    <property type="entry name" value="SAM-dependent_MTases_sf"/>
</dbReference>
<dbReference type="InterPro" id="IPR003358">
    <property type="entry name" value="tRNA_(Gua-N-7)_MeTrfase_Trmb"/>
</dbReference>
<dbReference type="InterPro" id="IPR055361">
    <property type="entry name" value="tRNA_methyltr_TrmB_bact"/>
</dbReference>
<dbReference type="NCBIfam" id="TIGR00091">
    <property type="entry name" value="tRNA (guanosine(46)-N7)-methyltransferase TrmB"/>
    <property type="match status" value="1"/>
</dbReference>
<dbReference type="PANTHER" id="PTHR23417">
    <property type="entry name" value="3-DEOXY-D-MANNO-OCTULOSONIC-ACID TRANSFERASE/TRNA GUANINE-N 7 - -METHYLTRANSFERASE"/>
    <property type="match status" value="1"/>
</dbReference>
<dbReference type="PANTHER" id="PTHR23417:SF14">
    <property type="entry name" value="PENTACOTRIPEPTIDE-REPEAT REGION OF PRORP DOMAIN-CONTAINING PROTEIN"/>
    <property type="match status" value="1"/>
</dbReference>
<dbReference type="Pfam" id="PF02390">
    <property type="entry name" value="Methyltransf_4"/>
    <property type="match status" value="1"/>
</dbReference>
<dbReference type="SUPFAM" id="SSF53335">
    <property type="entry name" value="S-adenosyl-L-methionine-dependent methyltransferases"/>
    <property type="match status" value="1"/>
</dbReference>
<dbReference type="PROSITE" id="PS51625">
    <property type="entry name" value="SAM_MT_TRMB"/>
    <property type="match status" value="1"/>
</dbReference>
<protein>
    <recommendedName>
        <fullName evidence="2">tRNA (guanine-N(7)-)-methyltransferase</fullName>
        <ecNumber evidence="2">2.1.1.33</ecNumber>
    </recommendedName>
    <alternativeName>
        <fullName evidence="2">tRNA (guanine(46)-N(7))-methyltransferase</fullName>
    </alternativeName>
    <alternativeName>
        <fullName evidence="2">tRNA(m7G46)-methyltransferase</fullName>
    </alternativeName>
</protein>
<name>TRMB_BUCAP</name>
<accession>Q8K927</accession>
<gene>
    <name evidence="2" type="primary">trmB</name>
    <name type="ordered locus">BUsg_533</name>
</gene>
<proteinExistence type="inferred from homology"/>